<reference key="1">
    <citation type="journal article" date="2006" name="Mol. Microbiol.">
        <title>Role of pathogenicity island-associated integrases in the genome plasticity of uropathogenic Escherichia coli strain 536.</title>
        <authorList>
            <person name="Hochhut B."/>
            <person name="Wilde C."/>
            <person name="Balling G."/>
            <person name="Middendorf B."/>
            <person name="Dobrindt U."/>
            <person name="Brzuszkiewicz E."/>
            <person name="Gottschalk G."/>
            <person name="Carniel E."/>
            <person name="Hacker J."/>
        </authorList>
    </citation>
    <scope>NUCLEOTIDE SEQUENCE [LARGE SCALE GENOMIC DNA]</scope>
    <source>
        <strain>536 / UPEC</strain>
    </source>
</reference>
<comment type="function">
    <text evidence="1">RNA chaperone with significant RNA binding, RNA strand exchange and RNA duplexing activities. May regulate ProP activity through an RNA-based, post-transcriptional mechanism.</text>
</comment>
<comment type="subcellular location">
    <subcellularLocation>
        <location evidence="1">Cytoplasm</location>
    </subcellularLocation>
</comment>
<comment type="similarity">
    <text evidence="1">Belongs to the ProQ family.</text>
</comment>
<organism>
    <name type="scientific">Escherichia coli O6:K15:H31 (strain 536 / UPEC)</name>
    <dbReference type="NCBI Taxonomy" id="362663"/>
    <lineage>
        <taxon>Bacteria</taxon>
        <taxon>Pseudomonadati</taxon>
        <taxon>Pseudomonadota</taxon>
        <taxon>Gammaproteobacteria</taxon>
        <taxon>Enterobacterales</taxon>
        <taxon>Enterobacteriaceae</taxon>
        <taxon>Escherichia</taxon>
    </lineage>
</organism>
<sequence length="232" mass="25878">MENQPKLNSSKEVIAFLAERFPHCFSAEGEARPLKIGIFQDLVDRVAGEMNLSKTQLRSALRLYTSSWRYLYGVKPGATRVDLDGNPCGELDEQHVEHARKQLEEAKARVQAQRAEQQAKKREAAAAAGEKEDAPRRERKPRPTTPRRKEGAERKPRSQKPVEKAPKTVKAPREEQHTPVSDISALTVGQALKVKAGQNAMDATVLEITKDGVRVQLNSGMSLIVRAEHLVF</sequence>
<gene>
    <name evidence="1" type="primary">proQ</name>
    <name type="ordered locus">ECP_1775</name>
</gene>
<protein>
    <recommendedName>
        <fullName evidence="1">RNA chaperone ProQ</fullName>
    </recommendedName>
</protein>
<proteinExistence type="inferred from homology"/>
<accession>Q0TH01</accession>
<feature type="chain" id="PRO_0000303089" description="RNA chaperone ProQ">
    <location>
        <begin position="1"/>
        <end position="232"/>
    </location>
</feature>
<feature type="region of interest" description="Disordered" evidence="2">
    <location>
        <begin position="105"/>
        <end position="182"/>
    </location>
</feature>
<feature type="compositionally biased region" description="Basic and acidic residues" evidence="2">
    <location>
        <begin position="117"/>
        <end position="136"/>
    </location>
</feature>
<feature type="compositionally biased region" description="Basic residues" evidence="2">
    <location>
        <begin position="137"/>
        <end position="146"/>
    </location>
</feature>
<feature type="compositionally biased region" description="Basic and acidic residues" evidence="2">
    <location>
        <begin position="147"/>
        <end position="177"/>
    </location>
</feature>
<keyword id="KW-0143">Chaperone</keyword>
<keyword id="KW-0963">Cytoplasm</keyword>
<keyword id="KW-0694">RNA-binding</keyword>
<name>PROQ_ECOL5</name>
<dbReference type="EMBL" id="CP000247">
    <property type="protein sequence ID" value="ABG69778.1"/>
    <property type="molecule type" value="Genomic_DNA"/>
</dbReference>
<dbReference type="RefSeq" id="WP_000431376.1">
    <property type="nucleotide sequence ID" value="NC_008253.1"/>
</dbReference>
<dbReference type="SMR" id="Q0TH01"/>
<dbReference type="KEGG" id="ecp:ECP_1775"/>
<dbReference type="HOGENOM" id="CLU_113254_0_0_6"/>
<dbReference type="Proteomes" id="UP000009182">
    <property type="component" value="Chromosome"/>
</dbReference>
<dbReference type="GO" id="GO:0005829">
    <property type="term" value="C:cytosol"/>
    <property type="evidence" value="ECO:0007669"/>
    <property type="project" value="TreeGrafter"/>
</dbReference>
<dbReference type="GO" id="GO:0033592">
    <property type="term" value="F:RNA strand annealing activity"/>
    <property type="evidence" value="ECO:0007669"/>
    <property type="project" value="UniProtKB-UniRule"/>
</dbReference>
<dbReference type="GO" id="GO:0034057">
    <property type="term" value="F:RNA strand-exchange activity"/>
    <property type="evidence" value="ECO:0007669"/>
    <property type="project" value="UniProtKB-UniRule"/>
</dbReference>
<dbReference type="GO" id="GO:0010608">
    <property type="term" value="P:post-transcriptional regulation of gene expression"/>
    <property type="evidence" value="ECO:0007669"/>
    <property type="project" value="InterPro"/>
</dbReference>
<dbReference type="FunFam" id="1.10.1710.10:FF:000001">
    <property type="entry name" value="RNA chaperone ProQ"/>
    <property type="match status" value="1"/>
</dbReference>
<dbReference type="Gene3D" id="1.10.1710.10">
    <property type="entry name" value="ProQ/FinO domain"/>
    <property type="match status" value="1"/>
</dbReference>
<dbReference type="HAMAP" id="MF_00749">
    <property type="entry name" value="ProQ"/>
    <property type="match status" value="1"/>
</dbReference>
<dbReference type="InterPro" id="IPR023529">
    <property type="entry name" value="ProQ"/>
</dbReference>
<dbReference type="InterPro" id="IPR016103">
    <property type="entry name" value="ProQ/FinO"/>
</dbReference>
<dbReference type="InterPro" id="IPR036442">
    <property type="entry name" value="ProQ/FinO_sf"/>
</dbReference>
<dbReference type="InterPro" id="IPR035236">
    <property type="entry name" value="ProQ_C"/>
</dbReference>
<dbReference type="NCBIfam" id="NF003434">
    <property type="entry name" value="PRK04950.1"/>
    <property type="match status" value="1"/>
</dbReference>
<dbReference type="PANTHER" id="PTHR38106">
    <property type="entry name" value="RNA CHAPERONE PROQ"/>
    <property type="match status" value="1"/>
</dbReference>
<dbReference type="PANTHER" id="PTHR38106:SF1">
    <property type="entry name" value="RNA CHAPERONE PROQ"/>
    <property type="match status" value="1"/>
</dbReference>
<dbReference type="Pfam" id="PF04352">
    <property type="entry name" value="ProQ"/>
    <property type="match status" value="1"/>
</dbReference>
<dbReference type="Pfam" id="PF17516">
    <property type="entry name" value="ProQ_C"/>
    <property type="match status" value="1"/>
</dbReference>
<dbReference type="SMART" id="SM00945">
    <property type="entry name" value="ProQ"/>
    <property type="match status" value="1"/>
</dbReference>
<dbReference type="SUPFAM" id="SSF48657">
    <property type="entry name" value="FinO-like"/>
    <property type="match status" value="1"/>
</dbReference>
<evidence type="ECO:0000255" key="1">
    <source>
        <dbReference type="HAMAP-Rule" id="MF_00749"/>
    </source>
</evidence>
<evidence type="ECO:0000256" key="2">
    <source>
        <dbReference type="SAM" id="MobiDB-lite"/>
    </source>
</evidence>